<evidence type="ECO:0000255" key="1">
    <source>
        <dbReference type="HAMAP-Rule" id="MF_01622"/>
    </source>
</evidence>
<gene>
    <name evidence="1" type="primary">selU</name>
    <name type="ordered locus">PP_0822</name>
</gene>
<keyword id="KW-1185">Reference proteome</keyword>
<keyword id="KW-0711">Selenium</keyword>
<keyword id="KW-0808">Transferase</keyword>
<sequence length="370" mass="41897">MRPDCTDFRQLFLDDVPMMDMRAPVEFAKGAFPGVVNLPLMNDQERQKVGTCYKQQGQAAAIALGHQLVSGATKQARLEAWAAFAKAHPDGYLYCFRGGLRSQIVQGWLRDEAGIQYPRVKGGYKAMRTFLLETTQQAVEQCDFVLVGGLTGTGKTDVLHQLDNVLDLEGHANHRGSSFGKRATAQPAQIDFENQLAIDVLKKRARGIGQFVLEDEGRIVGSCTVPLELYQGMQHYPLVWLEDSFTNRVERILRDYVVNLSAEFKAVHGEEDGPRLFAERMLQSMANIYKRLGGERHQRLSEMLREALQEQQRSGAVDLHRGWIEGLLNEYYDPMYAYQRAAKAERIEFAGDAVEVREYLKARALRQPRK</sequence>
<reference key="1">
    <citation type="journal article" date="2002" name="Environ. Microbiol.">
        <title>Complete genome sequence and comparative analysis of the metabolically versatile Pseudomonas putida KT2440.</title>
        <authorList>
            <person name="Nelson K.E."/>
            <person name="Weinel C."/>
            <person name="Paulsen I.T."/>
            <person name="Dodson R.J."/>
            <person name="Hilbert H."/>
            <person name="Martins dos Santos V.A.P."/>
            <person name="Fouts D.E."/>
            <person name="Gill S.R."/>
            <person name="Pop M."/>
            <person name="Holmes M."/>
            <person name="Brinkac L.M."/>
            <person name="Beanan M.J."/>
            <person name="DeBoy R.T."/>
            <person name="Daugherty S.C."/>
            <person name="Kolonay J.F."/>
            <person name="Madupu R."/>
            <person name="Nelson W.C."/>
            <person name="White O."/>
            <person name="Peterson J.D."/>
            <person name="Khouri H.M."/>
            <person name="Hance I."/>
            <person name="Chris Lee P."/>
            <person name="Holtzapple E.K."/>
            <person name="Scanlan D."/>
            <person name="Tran K."/>
            <person name="Moazzez A."/>
            <person name="Utterback T.R."/>
            <person name="Rizzo M."/>
            <person name="Lee K."/>
            <person name="Kosack D."/>
            <person name="Moestl D."/>
            <person name="Wedler H."/>
            <person name="Lauber J."/>
            <person name="Stjepandic D."/>
            <person name="Hoheisel J."/>
            <person name="Straetz M."/>
            <person name="Heim S."/>
            <person name="Kiewitz C."/>
            <person name="Eisen J.A."/>
            <person name="Timmis K.N."/>
            <person name="Duesterhoeft A."/>
            <person name="Tuemmler B."/>
            <person name="Fraser C.M."/>
        </authorList>
    </citation>
    <scope>NUCLEOTIDE SEQUENCE [LARGE SCALE GENOMIC DNA]</scope>
    <source>
        <strain>ATCC 47054 / DSM 6125 / CFBP 8728 / NCIMB 11950 / KT2440</strain>
    </source>
</reference>
<protein>
    <recommendedName>
        <fullName evidence="1">tRNA 2-selenouridine synthase</fullName>
        <ecNumber evidence="1">2.9.1.3</ecNumber>
    </recommendedName>
</protein>
<comment type="function">
    <text evidence="1">Involved in the post-transcriptional modification of the uridine at the wobble position (U34) of tRNA(Lys), tRNA(Glu) and tRNA(Gln). Catalyzes the conversion of 2-thiouridine (S2U-RNA) to 2-selenouridine (Se2U-RNA). Acts in a two-step process involving geranylation of 2-thiouridine (S2U) to S-geranyl-2-thiouridine (geS2U) and subsequent selenation of the latter derivative to 2-selenouridine (Se2U) in the tRNA chain.</text>
</comment>
<comment type="catalytic activity">
    <reaction evidence="1">
        <text>5-methylaminomethyl-2-thiouridine(34) in tRNA + selenophosphate + (2E)-geranyl diphosphate + H2O + H(+) = 5-methylaminomethyl-2-selenouridine(34) in tRNA + (2E)-thiogeraniol + phosphate + diphosphate</text>
        <dbReference type="Rhea" id="RHEA:42716"/>
        <dbReference type="Rhea" id="RHEA-COMP:10195"/>
        <dbReference type="Rhea" id="RHEA-COMP:10196"/>
        <dbReference type="ChEBI" id="CHEBI:15377"/>
        <dbReference type="ChEBI" id="CHEBI:15378"/>
        <dbReference type="ChEBI" id="CHEBI:16144"/>
        <dbReference type="ChEBI" id="CHEBI:33019"/>
        <dbReference type="ChEBI" id="CHEBI:43474"/>
        <dbReference type="ChEBI" id="CHEBI:58057"/>
        <dbReference type="ChEBI" id="CHEBI:74455"/>
        <dbReference type="ChEBI" id="CHEBI:82743"/>
        <dbReference type="ChEBI" id="CHEBI:143703"/>
        <dbReference type="EC" id="2.9.1.3"/>
    </reaction>
    <physiologicalReaction direction="left-to-right" evidence="1">
        <dbReference type="Rhea" id="RHEA:42717"/>
    </physiologicalReaction>
</comment>
<comment type="catalytic activity">
    <reaction evidence="1">
        <text>5-methylaminomethyl-2-thiouridine(34) in tRNA + (2E)-geranyl diphosphate = 5-methylaminomethyl-S-(2E)-geranyl-thiouridine(34) in tRNA + diphosphate</text>
        <dbReference type="Rhea" id="RHEA:14085"/>
        <dbReference type="Rhea" id="RHEA-COMP:10195"/>
        <dbReference type="Rhea" id="RHEA-COMP:14654"/>
        <dbReference type="ChEBI" id="CHEBI:33019"/>
        <dbReference type="ChEBI" id="CHEBI:58057"/>
        <dbReference type="ChEBI" id="CHEBI:74455"/>
        <dbReference type="ChEBI" id="CHEBI:140632"/>
    </reaction>
    <physiologicalReaction direction="left-to-right" evidence="1">
        <dbReference type="Rhea" id="RHEA:14086"/>
    </physiologicalReaction>
</comment>
<comment type="catalytic activity">
    <reaction evidence="1">
        <text>5-methylaminomethyl-S-(2E)-geranyl-thiouridine(34) in tRNA + selenophosphate + H(+) = 5-methylaminomethyl-2-(Se-phospho)selenouridine(34) in tRNA + (2E)-thiogeraniol</text>
        <dbReference type="Rhea" id="RHEA:60172"/>
        <dbReference type="Rhea" id="RHEA-COMP:14654"/>
        <dbReference type="Rhea" id="RHEA-COMP:15523"/>
        <dbReference type="ChEBI" id="CHEBI:15378"/>
        <dbReference type="ChEBI" id="CHEBI:16144"/>
        <dbReference type="ChEBI" id="CHEBI:140632"/>
        <dbReference type="ChEBI" id="CHEBI:143702"/>
        <dbReference type="ChEBI" id="CHEBI:143703"/>
    </reaction>
    <physiologicalReaction direction="left-to-right" evidence="1">
        <dbReference type="Rhea" id="RHEA:60173"/>
    </physiologicalReaction>
</comment>
<comment type="catalytic activity">
    <reaction evidence="1">
        <text>5-methylaminomethyl-2-(Se-phospho)selenouridine(34) in tRNA + H2O = 5-methylaminomethyl-2-selenouridine(34) in tRNA + phosphate</text>
        <dbReference type="Rhea" id="RHEA:60176"/>
        <dbReference type="Rhea" id="RHEA-COMP:10196"/>
        <dbReference type="Rhea" id="RHEA-COMP:15523"/>
        <dbReference type="ChEBI" id="CHEBI:15377"/>
        <dbReference type="ChEBI" id="CHEBI:43474"/>
        <dbReference type="ChEBI" id="CHEBI:82743"/>
        <dbReference type="ChEBI" id="CHEBI:143702"/>
    </reaction>
    <physiologicalReaction direction="left-to-right" evidence="1">
        <dbReference type="Rhea" id="RHEA:60177"/>
    </physiologicalReaction>
</comment>
<comment type="subunit">
    <text evidence="1">Monomer.</text>
</comment>
<comment type="similarity">
    <text evidence="1">Belongs to the SelU family.</text>
</comment>
<accession>Q88PM7</accession>
<organism>
    <name type="scientific">Pseudomonas putida (strain ATCC 47054 / DSM 6125 / CFBP 8728 / NCIMB 11950 / KT2440)</name>
    <dbReference type="NCBI Taxonomy" id="160488"/>
    <lineage>
        <taxon>Bacteria</taxon>
        <taxon>Pseudomonadati</taxon>
        <taxon>Pseudomonadota</taxon>
        <taxon>Gammaproteobacteria</taxon>
        <taxon>Pseudomonadales</taxon>
        <taxon>Pseudomonadaceae</taxon>
        <taxon>Pseudomonas</taxon>
    </lineage>
</organism>
<name>SELU_PSEPK</name>
<feature type="chain" id="PRO_0000210866" description="tRNA 2-selenouridine synthase">
    <location>
        <begin position="1"/>
        <end position="370"/>
    </location>
</feature>
<feature type="domain" description="Rhodanese" evidence="1">
    <location>
        <begin position="12"/>
        <end position="136"/>
    </location>
</feature>
<feature type="active site" description="S-selanylcysteine intermediate" evidence="1">
    <location>
        <position position="95"/>
    </location>
</feature>
<dbReference type="EC" id="2.9.1.3" evidence="1"/>
<dbReference type="EMBL" id="AE015451">
    <property type="protein sequence ID" value="AAN66447.1"/>
    <property type="molecule type" value="Genomic_DNA"/>
</dbReference>
<dbReference type="RefSeq" id="NP_742983.1">
    <property type="nucleotide sequence ID" value="NC_002947.4"/>
</dbReference>
<dbReference type="SMR" id="Q88PM7"/>
<dbReference type="STRING" id="160488.PP_0822"/>
<dbReference type="PaxDb" id="160488-PP_0822"/>
<dbReference type="DNASU" id="1044677"/>
<dbReference type="KEGG" id="ppu:PP_0822"/>
<dbReference type="PATRIC" id="fig|160488.4.peg.879"/>
<dbReference type="eggNOG" id="COG2603">
    <property type="taxonomic scope" value="Bacteria"/>
</dbReference>
<dbReference type="HOGENOM" id="CLU_043456_1_0_6"/>
<dbReference type="OrthoDB" id="9808735at2"/>
<dbReference type="PhylomeDB" id="Q88PM7"/>
<dbReference type="BioCyc" id="PPUT160488:G1G01-896-MONOMER"/>
<dbReference type="Proteomes" id="UP000000556">
    <property type="component" value="Chromosome"/>
</dbReference>
<dbReference type="GO" id="GO:0016765">
    <property type="term" value="F:transferase activity, transferring alkyl or aryl (other than methyl) groups"/>
    <property type="evidence" value="ECO:0007669"/>
    <property type="project" value="UniProtKB-UniRule"/>
</dbReference>
<dbReference type="GO" id="GO:0043828">
    <property type="term" value="F:tRNA 2-selenouridine synthase activity"/>
    <property type="evidence" value="ECO:0007669"/>
    <property type="project" value="UniProtKB-EC"/>
</dbReference>
<dbReference type="GO" id="GO:0002098">
    <property type="term" value="P:tRNA wobble uridine modification"/>
    <property type="evidence" value="ECO:0007669"/>
    <property type="project" value="UniProtKB-UniRule"/>
</dbReference>
<dbReference type="CDD" id="cd01520">
    <property type="entry name" value="RHOD_YbbB"/>
    <property type="match status" value="1"/>
</dbReference>
<dbReference type="Gene3D" id="3.40.250.10">
    <property type="entry name" value="Rhodanese-like domain"/>
    <property type="match status" value="1"/>
</dbReference>
<dbReference type="HAMAP" id="MF_01622">
    <property type="entry name" value="tRNA_sel_U_synth"/>
    <property type="match status" value="1"/>
</dbReference>
<dbReference type="InterPro" id="IPR001763">
    <property type="entry name" value="Rhodanese-like_dom"/>
</dbReference>
<dbReference type="InterPro" id="IPR036873">
    <property type="entry name" value="Rhodanese-like_dom_sf"/>
</dbReference>
<dbReference type="InterPro" id="IPR017582">
    <property type="entry name" value="SelU"/>
</dbReference>
<dbReference type="NCBIfam" id="NF008750">
    <property type="entry name" value="PRK11784.1-2"/>
    <property type="match status" value="1"/>
</dbReference>
<dbReference type="NCBIfam" id="NF008751">
    <property type="entry name" value="PRK11784.1-3"/>
    <property type="match status" value="1"/>
</dbReference>
<dbReference type="NCBIfam" id="TIGR03167">
    <property type="entry name" value="tRNA_sel_U_synt"/>
    <property type="match status" value="1"/>
</dbReference>
<dbReference type="PANTHER" id="PTHR30401">
    <property type="entry name" value="TRNA 2-SELENOURIDINE SYNTHASE"/>
    <property type="match status" value="1"/>
</dbReference>
<dbReference type="PANTHER" id="PTHR30401:SF0">
    <property type="entry name" value="TRNA 2-SELENOURIDINE SYNTHASE"/>
    <property type="match status" value="1"/>
</dbReference>
<dbReference type="SMART" id="SM00450">
    <property type="entry name" value="RHOD"/>
    <property type="match status" value="1"/>
</dbReference>
<dbReference type="SUPFAM" id="SSF52821">
    <property type="entry name" value="Rhodanese/Cell cycle control phosphatase"/>
    <property type="match status" value="1"/>
</dbReference>
<dbReference type="PROSITE" id="PS50206">
    <property type="entry name" value="RHODANESE_3"/>
    <property type="match status" value="1"/>
</dbReference>
<proteinExistence type="inferred from homology"/>